<keyword id="KW-0002">3D-structure</keyword>
<keyword id="KW-0966">Cell projection</keyword>
<keyword id="KW-0969">Cilium</keyword>
<keyword id="KW-0963">Cytoplasm</keyword>
<keyword id="KW-0206">Cytoskeleton</keyword>
<keyword id="KW-0282">Flagellum</keyword>
<keyword id="KW-0433">Leucine-rich repeat</keyword>
<keyword id="KW-1267">Proteomics identification</keyword>
<keyword id="KW-1185">Reference proteome</keyword>
<keyword id="KW-0677">Repeat</keyword>
<name>DRC5_HUMAN</name>
<proteinExistence type="evidence at protein level"/>
<dbReference type="EMBL" id="AK301825">
    <property type="protein sequence ID" value="BAG63271.1"/>
    <property type="molecule type" value="mRNA"/>
</dbReference>
<dbReference type="EMBL" id="AL353588">
    <property type="status" value="NOT_ANNOTATED_CDS"/>
    <property type="molecule type" value="Genomic_DNA"/>
</dbReference>
<dbReference type="EMBL" id="BC035022">
    <property type="protein sequence ID" value="AAH35022.1"/>
    <property type="molecule type" value="mRNA"/>
</dbReference>
<dbReference type="CCDS" id="CCDS4910.1"/>
<dbReference type="RefSeq" id="NP_872345.2">
    <property type="nucleotide sequence ID" value="NM_182539.4"/>
</dbReference>
<dbReference type="RefSeq" id="XP_005248929.1">
    <property type="nucleotide sequence ID" value="XM_005248872.2"/>
</dbReference>
<dbReference type="RefSeq" id="XP_011512638.1">
    <property type="nucleotide sequence ID" value="XM_011514336.2"/>
</dbReference>
<dbReference type="RefSeq" id="XP_011512640.1">
    <property type="nucleotide sequence ID" value="XM_011514338.3"/>
</dbReference>
<dbReference type="RefSeq" id="XP_047274228.1">
    <property type="nucleotide sequence ID" value="XM_047418272.1"/>
</dbReference>
<dbReference type="RefSeq" id="XP_047274229.1">
    <property type="nucleotide sequence ID" value="XM_047418273.1"/>
</dbReference>
<dbReference type="PDB" id="8J07">
    <property type="method" value="EM"/>
    <property type="resolution" value="4.10 A"/>
    <property type="chains" value="5=1-501"/>
</dbReference>
<dbReference type="PDBsum" id="8J07"/>
<dbReference type="EMDB" id="EMD-35888"/>
<dbReference type="SMR" id="Q5JU00"/>
<dbReference type="ComplexPortal" id="CPX-8086">
    <property type="entry name" value="Nexin-dynein regulatory complex"/>
</dbReference>
<dbReference type="FunCoup" id="Q5JU00">
    <property type="interactions" value="93"/>
</dbReference>
<dbReference type="IntAct" id="Q5JU00">
    <property type="interactions" value="80"/>
</dbReference>
<dbReference type="STRING" id="9606.ENSP00000360560"/>
<dbReference type="iPTMnet" id="Q5JU00"/>
<dbReference type="PhosphoSitePlus" id="Q5JU00"/>
<dbReference type="BioMuta" id="TCTE1"/>
<dbReference type="DMDM" id="74755678"/>
<dbReference type="MassIVE" id="Q5JU00"/>
<dbReference type="PaxDb" id="9606-ENSP00000360560"/>
<dbReference type="PeptideAtlas" id="Q5JU00"/>
<dbReference type="ProteomicsDB" id="63246"/>
<dbReference type="Antibodypedia" id="30669">
    <property type="antibodies" value="75 antibodies from 19 providers"/>
</dbReference>
<dbReference type="DNASU" id="202500"/>
<dbReference type="Ensembl" id="ENST00000371505.5">
    <property type="protein sequence ID" value="ENSP00000360560.4"/>
    <property type="gene ID" value="ENSG00000146221.10"/>
</dbReference>
<dbReference type="GeneID" id="202500"/>
<dbReference type="KEGG" id="hsa:202500"/>
<dbReference type="MANE-Select" id="ENST00000371505.5">
    <property type="protein sequence ID" value="ENSP00000360560.4"/>
    <property type="RefSeq nucleotide sequence ID" value="NM_182539.4"/>
    <property type="RefSeq protein sequence ID" value="NP_872345.2"/>
</dbReference>
<dbReference type="UCSC" id="uc003oxi.3">
    <property type="organism name" value="human"/>
</dbReference>
<dbReference type="AGR" id="HGNC:11693"/>
<dbReference type="CTD" id="202500"/>
<dbReference type="DisGeNET" id="202500"/>
<dbReference type="GeneCards" id="TCTE1"/>
<dbReference type="HGNC" id="HGNC:11693">
    <property type="gene designation" value="TCTE1"/>
</dbReference>
<dbReference type="HPA" id="ENSG00000146221">
    <property type="expression patterns" value="Group enriched (brain, fallopian tube, testis)"/>
</dbReference>
<dbReference type="MIM" id="186975">
    <property type="type" value="gene"/>
</dbReference>
<dbReference type="neXtProt" id="NX_Q5JU00"/>
<dbReference type="OpenTargets" id="ENSG00000146221"/>
<dbReference type="PharmGKB" id="PA36413"/>
<dbReference type="VEuPathDB" id="HostDB:ENSG00000146221"/>
<dbReference type="eggNOG" id="KOG0619">
    <property type="taxonomic scope" value="Eukaryota"/>
</dbReference>
<dbReference type="GeneTree" id="ENSGT00940000159341"/>
<dbReference type="HOGENOM" id="CLU_029623_1_0_1"/>
<dbReference type="InParanoid" id="Q5JU00"/>
<dbReference type="OMA" id="PVCHVAR"/>
<dbReference type="OrthoDB" id="341587at2759"/>
<dbReference type="PAN-GO" id="Q5JU00">
    <property type="GO annotations" value="1 GO annotation based on evolutionary models"/>
</dbReference>
<dbReference type="PhylomeDB" id="Q5JU00"/>
<dbReference type="TreeFam" id="TF325870"/>
<dbReference type="PathwayCommons" id="Q5JU00"/>
<dbReference type="SignaLink" id="Q5JU00"/>
<dbReference type="BioGRID-ORCS" id="202500">
    <property type="hits" value="23 hits in 1138 CRISPR screens"/>
</dbReference>
<dbReference type="GenomeRNAi" id="202500"/>
<dbReference type="Pharos" id="Q5JU00">
    <property type="development level" value="Tbio"/>
</dbReference>
<dbReference type="PRO" id="PR:Q5JU00"/>
<dbReference type="Proteomes" id="UP000005640">
    <property type="component" value="Chromosome 6"/>
</dbReference>
<dbReference type="RNAct" id="Q5JU00">
    <property type="molecule type" value="protein"/>
</dbReference>
<dbReference type="Bgee" id="ENSG00000146221">
    <property type="expression patterns" value="Expressed in right uterine tube and 91 other cell types or tissues"/>
</dbReference>
<dbReference type="ExpressionAtlas" id="Q5JU00">
    <property type="expression patterns" value="baseline and differential"/>
</dbReference>
<dbReference type="GO" id="GO:0005737">
    <property type="term" value="C:cytoplasm"/>
    <property type="evidence" value="ECO:0007669"/>
    <property type="project" value="UniProtKB-KW"/>
</dbReference>
<dbReference type="GO" id="GO:0005856">
    <property type="term" value="C:cytoskeleton"/>
    <property type="evidence" value="ECO:0007669"/>
    <property type="project" value="UniProtKB-KW"/>
</dbReference>
<dbReference type="GO" id="GO:0036126">
    <property type="term" value="C:sperm flagellum"/>
    <property type="evidence" value="ECO:0000250"/>
    <property type="project" value="UniProtKB"/>
</dbReference>
<dbReference type="GO" id="GO:0030317">
    <property type="term" value="P:flagellated sperm motility"/>
    <property type="evidence" value="ECO:0000250"/>
    <property type="project" value="UniProtKB"/>
</dbReference>
<dbReference type="GO" id="GO:0007018">
    <property type="term" value="P:microtubule-based movement"/>
    <property type="evidence" value="ECO:0000318"/>
    <property type="project" value="GO_Central"/>
</dbReference>
<dbReference type="CDD" id="cd00116">
    <property type="entry name" value="LRR_RI"/>
    <property type="match status" value="1"/>
</dbReference>
<dbReference type="FunFam" id="3.80.10.10:FF:000321">
    <property type="entry name" value="T-complex-associated testis-expressed protein 1"/>
    <property type="match status" value="1"/>
</dbReference>
<dbReference type="FunFam" id="3.80.10.10:FF:000373">
    <property type="entry name" value="T-complex-associated testis-expressed protein 1"/>
    <property type="match status" value="1"/>
</dbReference>
<dbReference type="Gene3D" id="3.80.10.10">
    <property type="entry name" value="Ribonuclease Inhibitor"/>
    <property type="match status" value="2"/>
</dbReference>
<dbReference type="InterPro" id="IPR052410">
    <property type="entry name" value="DRC5"/>
</dbReference>
<dbReference type="InterPro" id="IPR001611">
    <property type="entry name" value="Leu-rich_rpt"/>
</dbReference>
<dbReference type="InterPro" id="IPR032675">
    <property type="entry name" value="LRR_dom_sf"/>
</dbReference>
<dbReference type="PANTHER" id="PTHR24107:SF27">
    <property type="entry name" value="DYNEIN REGULATORY COMPLEX SUBUNIT 5"/>
    <property type="match status" value="1"/>
</dbReference>
<dbReference type="PANTHER" id="PTHR24107">
    <property type="entry name" value="YNEIN REGULATORY COMPLEX SUBUNIT 5"/>
    <property type="match status" value="1"/>
</dbReference>
<dbReference type="Pfam" id="PF13516">
    <property type="entry name" value="LRR_6"/>
    <property type="match status" value="5"/>
</dbReference>
<dbReference type="SMART" id="SM00368">
    <property type="entry name" value="LRR_RI"/>
    <property type="match status" value="5"/>
</dbReference>
<dbReference type="SUPFAM" id="SSF52047">
    <property type="entry name" value="RNI-like"/>
    <property type="match status" value="1"/>
</dbReference>
<gene>
    <name type="primary">TCTE1</name>
    <name evidence="1" type="synonym">DRC5</name>
</gene>
<organism>
    <name type="scientific">Homo sapiens</name>
    <name type="common">Human</name>
    <dbReference type="NCBI Taxonomy" id="9606"/>
    <lineage>
        <taxon>Eukaryota</taxon>
        <taxon>Metazoa</taxon>
        <taxon>Chordata</taxon>
        <taxon>Craniata</taxon>
        <taxon>Vertebrata</taxon>
        <taxon>Euteleostomi</taxon>
        <taxon>Mammalia</taxon>
        <taxon>Eutheria</taxon>
        <taxon>Euarchontoglires</taxon>
        <taxon>Primates</taxon>
        <taxon>Haplorrhini</taxon>
        <taxon>Catarrhini</taxon>
        <taxon>Hominidae</taxon>
        <taxon>Homo</taxon>
    </lineage>
</organism>
<accession>Q5JU00</accession>
<accession>B4DX59</accession>
<accession>Q8IYS6</accession>
<feature type="chain" id="PRO_0000326525" description="Dynein regulatory complex subunit 5">
    <location>
        <begin position="1"/>
        <end position="501"/>
    </location>
</feature>
<feature type="repeat" description="LRR 1">
    <location>
        <begin position="308"/>
        <end position="321"/>
    </location>
</feature>
<feature type="repeat" description="LRR 2">
    <location>
        <begin position="335"/>
        <end position="355"/>
    </location>
</feature>
<feature type="repeat" description="LRR 3">
    <location>
        <begin position="363"/>
        <end position="383"/>
    </location>
</feature>
<feature type="repeat" description="LRR 4">
    <location>
        <begin position="391"/>
        <end position="411"/>
    </location>
</feature>
<feature type="repeat" description="LRR 5">
    <location>
        <begin position="419"/>
        <end position="439"/>
    </location>
</feature>
<feature type="region of interest" description="Disordered" evidence="3">
    <location>
        <begin position="1"/>
        <end position="56"/>
    </location>
</feature>
<feature type="region of interest" description="Disordered" evidence="3">
    <location>
        <begin position="202"/>
        <end position="222"/>
    </location>
</feature>
<feature type="compositionally biased region" description="Polar residues" evidence="3">
    <location>
        <begin position="1"/>
        <end position="23"/>
    </location>
</feature>
<feature type="compositionally biased region" description="Low complexity" evidence="3">
    <location>
        <begin position="24"/>
        <end position="34"/>
    </location>
</feature>
<feature type="sequence variant" id="VAR_040073" description="In dbSNP:rs324146." evidence="4 5">
    <original>P</original>
    <variation>L</variation>
    <location>
        <position position="35"/>
    </location>
</feature>
<feature type="sequence variant" id="VAR_040074" description="In dbSNP:rs17853373." evidence="5">
    <original>H</original>
    <variation>R</variation>
    <location>
        <position position="53"/>
    </location>
</feature>
<feature type="sequence variant" id="VAR_040075" description="In dbSNP:rs2297336.">
    <original>F</original>
    <variation>S</variation>
    <location>
        <position position="261"/>
    </location>
</feature>
<sequence>MQDTVTTSALLDPSHSSVSTQDNSSTGGHTSSTSPQLSKPSITPVPAKSRNPHPRANIRRMRRIIAEDPEWSLAIVPLLTELCIQHIIRNFQKNPILKQMLPEHQQKVLNHLSPDLPLAVTANLIDSENYWLRCCMHRWPVCHVAHHGGSWKRMFFERHLENLLKHFIPGTTDPAVILDLLPLCRNYVRRVHVDQFLPPVQLPAQLRPGDQSDSGSEGEMEEPTVDHYQLGDLVAGLSHLEELDLVYDVKDCGMNFEWNLFLFTYRDCLSLAAAIKACHTLKIFKLTRSKVDDDKARIIIRSLLDHPVLEELDLSQNLIGDRGARGAAKLLSHSRLRVLNLANNQVRAPGAQSLAHALAHNTNLISLNLRLNCIEDEGGQALAHALQTNKCLTTLHLGGNELSEPTATLLSQVLAINTTLTSINLSCNHIGLDGGKQLLEGMSDNKTLLEFDLRLSDVAQESEYLIGQALYANREAARQRALNPSHFMSTITANGPENSVG</sequence>
<reference key="1">
    <citation type="journal article" date="2004" name="Nat. Genet.">
        <title>Complete sequencing and characterization of 21,243 full-length human cDNAs.</title>
        <authorList>
            <person name="Ota T."/>
            <person name="Suzuki Y."/>
            <person name="Nishikawa T."/>
            <person name="Otsuki T."/>
            <person name="Sugiyama T."/>
            <person name="Irie R."/>
            <person name="Wakamatsu A."/>
            <person name="Hayashi K."/>
            <person name="Sato H."/>
            <person name="Nagai K."/>
            <person name="Kimura K."/>
            <person name="Makita H."/>
            <person name="Sekine M."/>
            <person name="Obayashi M."/>
            <person name="Nishi T."/>
            <person name="Shibahara T."/>
            <person name="Tanaka T."/>
            <person name="Ishii S."/>
            <person name="Yamamoto J."/>
            <person name="Saito K."/>
            <person name="Kawai Y."/>
            <person name="Isono Y."/>
            <person name="Nakamura Y."/>
            <person name="Nagahari K."/>
            <person name="Murakami K."/>
            <person name="Yasuda T."/>
            <person name="Iwayanagi T."/>
            <person name="Wagatsuma M."/>
            <person name="Shiratori A."/>
            <person name="Sudo H."/>
            <person name="Hosoiri T."/>
            <person name="Kaku Y."/>
            <person name="Kodaira H."/>
            <person name="Kondo H."/>
            <person name="Sugawara M."/>
            <person name="Takahashi M."/>
            <person name="Kanda K."/>
            <person name="Yokoi T."/>
            <person name="Furuya T."/>
            <person name="Kikkawa E."/>
            <person name="Omura Y."/>
            <person name="Abe K."/>
            <person name="Kamihara K."/>
            <person name="Katsuta N."/>
            <person name="Sato K."/>
            <person name="Tanikawa M."/>
            <person name="Yamazaki M."/>
            <person name="Ninomiya K."/>
            <person name="Ishibashi T."/>
            <person name="Yamashita H."/>
            <person name="Murakawa K."/>
            <person name="Fujimori K."/>
            <person name="Tanai H."/>
            <person name="Kimata M."/>
            <person name="Watanabe M."/>
            <person name="Hiraoka S."/>
            <person name="Chiba Y."/>
            <person name="Ishida S."/>
            <person name="Ono Y."/>
            <person name="Takiguchi S."/>
            <person name="Watanabe S."/>
            <person name="Yosida M."/>
            <person name="Hotuta T."/>
            <person name="Kusano J."/>
            <person name="Kanehori K."/>
            <person name="Takahashi-Fujii A."/>
            <person name="Hara H."/>
            <person name="Tanase T.-O."/>
            <person name="Nomura Y."/>
            <person name="Togiya S."/>
            <person name="Komai F."/>
            <person name="Hara R."/>
            <person name="Takeuchi K."/>
            <person name="Arita M."/>
            <person name="Imose N."/>
            <person name="Musashino K."/>
            <person name="Yuuki H."/>
            <person name="Oshima A."/>
            <person name="Sasaki N."/>
            <person name="Aotsuka S."/>
            <person name="Yoshikawa Y."/>
            <person name="Matsunawa H."/>
            <person name="Ichihara T."/>
            <person name="Shiohata N."/>
            <person name="Sano S."/>
            <person name="Moriya S."/>
            <person name="Momiyama H."/>
            <person name="Satoh N."/>
            <person name="Takami S."/>
            <person name="Terashima Y."/>
            <person name="Suzuki O."/>
            <person name="Nakagawa S."/>
            <person name="Senoh A."/>
            <person name="Mizoguchi H."/>
            <person name="Goto Y."/>
            <person name="Shimizu F."/>
            <person name="Wakebe H."/>
            <person name="Hishigaki H."/>
            <person name="Watanabe T."/>
            <person name="Sugiyama A."/>
            <person name="Takemoto M."/>
            <person name="Kawakami B."/>
            <person name="Yamazaki M."/>
            <person name="Watanabe K."/>
            <person name="Kumagai A."/>
            <person name="Itakura S."/>
            <person name="Fukuzumi Y."/>
            <person name="Fujimori Y."/>
            <person name="Komiyama M."/>
            <person name="Tashiro H."/>
            <person name="Tanigami A."/>
            <person name="Fujiwara T."/>
            <person name="Ono T."/>
            <person name="Yamada K."/>
            <person name="Fujii Y."/>
            <person name="Ozaki K."/>
            <person name="Hirao M."/>
            <person name="Ohmori Y."/>
            <person name="Kawabata A."/>
            <person name="Hikiji T."/>
            <person name="Kobatake N."/>
            <person name="Inagaki H."/>
            <person name="Ikema Y."/>
            <person name="Okamoto S."/>
            <person name="Okitani R."/>
            <person name="Kawakami T."/>
            <person name="Noguchi S."/>
            <person name="Itoh T."/>
            <person name="Shigeta K."/>
            <person name="Senba T."/>
            <person name="Matsumura K."/>
            <person name="Nakajima Y."/>
            <person name="Mizuno T."/>
            <person name="Morinaga M."/>
            <person name="Sasaki M."/>
            <person name="Togashi T."/>
            <person name="Oyama M."/>
            <person name="Hata H."/>
            <person name="Watanabe M."/>
            <person name="Komatsu T."/>
            <person name="Mizushima-Sugano J."/>
            <person name="Satoh T."/>
            <person name="Shirai Y."/>
            <person name="Takahashi Y."/>
            <person name="Nakagawa K."/>
            <person name="Okumura K."/>
            <person name="Nagase T."/>
            <person name="Nomura N."/>
            <person name="Kikuchi H."/>
            <person name="Masuho Y."/>
            <person name="Yamashita R."/>
            <person name="Nakai K."/>
            <person name="Yada T."/>
            <person name="Nakamura Y."/>
            <person name="Ohara O."/>
            <person name="Isogai T."/>
            <person name="Sugano S."/>
        </authorList>
    </citation>
    <scope>NUCLEOTIDE SEQUENCE [LARGE SCALE MRNA]</scope>
    <scope>VARIANT LEU-35</scope>
    <source>
        <tissue>Testis</tissue>
    </source>
</reference>
<reference key="2">
    <citation type="journal article" date="2003" name="Nature">
        <title>The DNA sequence and analysis of human chromosome 6.</title>
        <authorList>
            <person name="Mungall A.J."/>
            <person name="Palmer S.A."/>
            <person name="Sims S.K."/>
            <person name="Edwards C.A."/>
            <person name="Ashurst J.L."/>
            <person name="Wilming L."/>
            <person name="Jones M.C."/>
            <person name="Horton R."/>
            <person name="Hunt S.E."/>
            <person name="Scott C.E."/>
            <person name="Gilbert J.G.R."/>
            <person name="Clamp M.E."/>
            <person name="Bethel G."/>
            <person name="Milne S."/>
            <person name="Ainscough R."/>
            <person name="Almeida J.P."/>
            <person name="Ambrose K.D."/>
            <person name="Andrews T.D."/>
            <person name="Ashwell R.I.S."/>
            <person name="Babbage A.K."/>
            <person name="Bagguley C.L."/>
            <person name="Bailey J."/>
            <person name="Banerjee R."/>
            <person name="Barker D.J."/>
            <person name="Barlow K.F."/>
            <person name="Bates K."/>
            <person name="Beare D.M."/>
            <person name="Beasley H."/>
            <person name="Beasley O."/>
            <person name="Bird C.P."/>
            <person name="Blakey S.E."/>
            <person name="Bray-Allen S."/>
            <person name="Brook J."/>
            <person name="Brown A.J."/>
            <person name="Brown J.Y."/>
            <person name="Burford D.C."/>
            <person name="Burrill W."/>
            <person name="Burton J."/>
            <person name="Carder C."/>
            <person name="Carter N.P."/>
            <person name="Chapman J.C."/>
            <person name="Clark S.Y."/>
            <person name="Clark G."/>
            <person name="Clee C.M."/>
            <person name="Clegg S."/>
            <person name="Cobley V."/>
            <person name="Collier R.E."/>
            <person name="Collins J.E."/>
            <person name="Colman L.K."/>
            <person name="Corby N.R."/>
            <person name="Coville G.J."/>
            <person name="Culley K.M."/>
            <person name="Dhami P."/>
            <person name="Davies J."/>
            <person name="Dunn M."/>
            <person name="Earthrowl M.E."/>
            <person name="Ellington A.E."/>
            <person name="Evans K.A."/>
            <person name="Faulkner L."/>
            <person name="Francis M.D."/>
            <person name="Frankish A."/>
            <person name="Frankland J."/>
            <person name="French L."/>
            <person name="Garner P."/>
            <person name="Garnett J."/>
            <person name="Ghori M.J."/>
            <person name="Gilby L.M."/>
            <person name="Gillson C.J."/>
            <person name="Glithero R.J."/>
            <person name="Grafham D.V."/>
            <person name="Grant M."/>
            <person name="Gribble S."/>
            <person name="Griffiths C."/>
            <person name="Griffiths M.N.D."/>
            <person name="Hall R."/>
            <person name="Halls K.S."/>
            <person name="Hammond S."/>
            <person name="Harley J.L."/>
            <person name="Hart E.A."/>
            <person name="Heath P.D."/>
            <person name="Heathcott R."/>
            <person name="Holmes S.J."/>
            <person name="Howden P.J."/>
            <person name="Howe K.L."/>
            <person name="Howell G.R."/>
            <person name="Huckle E."/>
            <person name="Humphray S.J."/>
            <person name="Humphries M.D."/>
            <person name="Hunt A.R."/>
            <person name="Johnson C.M."/>
            <person name="Joy A.A."/>
            <person name="Kay M."/>
            <person name="Keenan S.J."/>
            <person name="Kimberley A.M."/>
            <person name="King A."/>
            <person name="Laird G.K."/>
            <person name="Langford C."/>
            <person name="Lawlor S."/>
            <person name="Leongamornlert D.A."/>
            <person name="Leversha M."/>
            <person name="Lloyd C.R."/>
            <person name="Lloyd D.M."/>
            <person name="Loveland J.E."/>
            <person name="Lovell J."/>
            <person name="Martin S."/>
            <person name="Mashreghi-Mohammadi M."/>
            <person name="Maslen G.L."/>
            <person name="Matthews L."/>
            <person name="McCann O.T."/>
            <person name="McLaren S.J."/>
            <person name="McLay K."/>
            <person name="McMurray A."/>
            <person name="Moore M.J.F."/>
            <person name="Mullikin J.C."/>
            <person name="Niblett D."/>
            <person name="Nickerson T."/>
            <person name="Novik K.L."/>
            <person name="Oliver K."/>
            <person name="Overton-Larty E.K."/>
            <person name="Parker A."/>
            <person name="Patel R."/>
            <person name="Pearce A.V."/>
            <person name="Peck A.I."/>
            <person name="Phillimore B.J.C.T."/>
            <person name="Phillips S."/>
            <person name="Plumb R.W."/>
            <person name="Porter K.M."/>
            <person name="Ramsey Y."/>
            <person name="Ranby S.A."/>
            <person name="Rice C.M."/>
            <person name="Ross M.T."/>
            <person name="Searle S.M."/>
            <person name="Sehra H.K."/>
            <person name="Sheridan E."/>
            <person name="Skuce C.D."/>
            <person name="Smith S."/>
            <person name="Smith M."/>
            <person name="Spraggon L."/>
            <person name="Squares S.L."/>
            <person name="Steward C.A."/>
            <person name="Sycamore N."/>
            <person name="Tamlyn-Hall G."/>
            <person name="Tester J."/>
            <person name="Theaker A.J."/>
            <person name="Thomas D.W."/>
            <person name="Thorpe A."/>
            <person name="Tracey A."/>
            <person name="Tromans A."/>
            <person name="Tubby B."/>
            <person name="Wall M."/>
            <person name="Wallis J.M."/>
            <person name="West A.P."/>
            <person name="White S.S."/>
            <person name="Whitehead S.L."/>
            <person name="Whittaker H."/>
            <person name="Wild A."/>
            <person name="Willey D.J."/>
            <person name="Wilmer T.E."/>
            <person name="Wood J.M."/>
            <person name="Wray P.W."/>
            <person name="Wyatt J.C."/>
            <person name="Young L."/>
            <person name="Younger R.M."/>
            <person name="Bentley D.R."/>
            <person name="Coulson A."/>
            <person name="Durbin R.M."/>
            <person name="Hubbard T."/>
            <person name="Sulston J.E."/>
            <person name="Dunham I."/>
            <person name="Rogers J."/>
            <person name="Beck S."/>
        </authorList>
    </citation>
    <scope>NUCLEOTIDE SEQUENCE [LARGE SCALE GENOMIC DNA]</scope>
</reference>
<reference key="3">
    <citation type="journal article" date="2004" name="Genome Res.">
        <title>The status, quality, and expansion of the NIH full-length cDNA project: the Mammalian Gene Collection (MGC).</title>
        <authorList>
            <consortium name="The MGC Project Team"/>
        </authorList>
    </citation>
    <scope>NUCLEOTIDE SEQUENCE [LARGE SCALE MRNA]</scope>
    <scope>VARIANTS LEU-35 AND ARG-53</scope>
    <source>
        <tissue>Testis</tissue>
    </source>
</reference>
<reference key="4">
    <citation type="journal article" date="2021" name="Hum. Mol. Genet.">
        <title>Loss of DRC1 function leads to multiple morphological abnormalities of the sperm flagella and male infertility in human and mouse.</title>
        <authorList>
            <person name="Zhang J."/>
            <person name="He X."/>
            <person name="Wu H."/>
            <person name="Zhang X."/>
            <person name="Yang S."/>
            <person name="Liu C."/>
            <person name="Liu S."/>
            <person name="Hua R."/>
            <person name="Zhou S."/>
            <person name="Zhao S."/>
            <person name="Hu F."/>
            <person name="Zhang J."/>
            <person name="Liu W."/>
            <person name="Cheng H."/>
            <person name="Gao Y."/>
            <person name="Zhang F."/>
            <person name="Cao Y."/>
            <person name="Liu M."/>
        </authorList>
    </citation>
    <scope>INTERACTION WITH DRC1</scope>
</reference>
<protein>
    <recommendedName>
        <fullName evidence="1">Dynein regulatory complex subunit 5</fullName>
    </recommendedName>
    <alternativeName>
        <fullName>T-complex-associated testis-expressed protein 1</fullName>
        <shortName>Tcte-1</shortName>
    </alternativeName>
</protein>
<evidence type="ECO:0000250" key="1">
    <source>
        <dbReference type="UniProtKB" id="A6H639"/>
    </source>
</evidence>
<evidence type="ECO:0000250" key="2">
    <source>
        <dbReference type="UniProtKB" id="A8HMZ4"/>
    </source>
</evidence>
<evidence type="ECO:0000256" key="3">
    <source>
        <dbReference type="SAM" id="MobiDB-lite"/>
    </source>
</evidence>
<evidence type="ECO:0000269" key="4">
    <source>
    </source>
</evidence>
<evidence type="ECO:0000269" key="5">
    <source>
    </source>
</evidence>
<evidence type="ECO:0000269" key="6">
    <source>
    </source>
</evidence>
<evidence type="ECO:0000305" key="7"/>
<comment type="function">
    <text evidence="1 2">Component of the nexin-dynein regulatory complex (N-DRC) a key regulator of ciliary/flagellar motility which maintains the alignment and integrity of the distal axoneme and regulates microtubule sliding in motile axonemes. May play a role in the assembly of N-DRC. May be required for sperm motility.</text>
</comment>
<comment type="subunit">
    <text evidence="1 6">Component of the nexin-dynein regulatory complex (N-DRC). Interacts with DRC1 (PubMed:34169321). Interacts with FBXL13/DRC6, DRC3 and DRC7.</text>
</comment>
<comment type="subcellular location">
    <subcellularLocation>
        <location evidence="1">Cell projection</location>
        <location evidence="1">Cilium</location>
        <location evidence="1">Flagellum</location>
    </subcellularLocation>
    <subcellularLocation>
        <location evidence="2">Cytoplasm</location>
        <location evidence="2">Cytoskeleton</location>
        <location evidence="2">Flagellum axoneme</location>
    </subcellularLocation>
    <text evidence="1">Detected along the length of the sperm flagellum.</text>
</comment>
<comment type="similarity">
    <text evidence="7">Belongs to the DRC5 family.</text>
</comment>